<organism>
    <name type="scientific">Cercospora nicotianae</name>
    <name type="common">Barn spot disease fungus</name>
    <dbReference type="NCBI Taxonomy" id="29003"/>
    <lineage>
        <taxon>Eukaryota</taxon>
        <taxon>Fungi</taxon>
        <taxon>Dikarya</taxon>
        <taxon>Ascomycota</taxon>
        <taxon>Pezizomycotina</taxon>
        <taxon>Dothideomycetes</taxon>
        <taxon>Dothideomycetidae</taxon>
        <taxon>Mycosphaerellales</taxon>
        <taxon>Mycosphaerellaceae</taxon>
        <taxon>Cercospora</taxon>
    </lineage>
</organism>
<protein>
    <recommendedName>
        <fullName evidence="18">Non-reducing polyketide synthase CTB1</fullName>
        <ecNumber evidence="13">2.3.1.-</ecNumber>
    </recommendedName>
    <alternativeName>
        <fullName evidence="18">Cercosporin toxin biosynthesis cluster protein 1</fullName>
    </alternativeName>
</protein>
<proteinExistence type="evidence at protein level"/>
<reference key="1">
    <citation type="journal article" date="2005" name="Mol. Plant Microbe Interact.">
        <title>The CTB1 gene encoding a fungal polyketide synthase is required for cercosporin biosynthesis and fungal virulence of Cercospora nicotianae.</title>
        <authorList>
            <person name="Choquer M."/>
            <person name="Dekkers K.L."/>
            <person name="Chen H.Q."/>
            <person name="Cao L."/>
            <person name="Ueng P.P."/>
            <person name="Daub M.E."/>
            <person name="Chung K.R."/>
        </authorList>
    </citation>
    <scope>NUCLEOTIDE SEQUENCE [MRNA]</scope>
    <scope>FUNCTION</scope>
    <scope>DISRUPTION PHENOTYPE</scope>
    <scope>DOMAIN</scope>
    <scope>PATHWAY</scope>
</reference>
<reference key="2">
    <citation type="journal article" date="2003" name="Mol. Genet. Genomics">
        <title>Cercosporin-deficient mutants by plasmid tagging in the asexual fungus Cercospora nicotianae.</title>
        <authorList>
            <person name="Chung K.R."/>
            <person name="Ehrenshaft M."/>
            <person name="Wetzel D.K."/>
            <person name="Daub M.E."/>
        </authorList>
    </citation>
    <scope>NUCLEOTIDE SEQUENCE [GENOMIC DNA] OF 1193-1416</scope>
    <scope>FUNCTION</scope>
    <scope>DISRUPTION PHENOTYPE</scope>
    <scope>PATHWAY</scope>
    <source>
        <strain>ATCC 18366</strain>
    </source>
</reference>
<reference key="3">
    <citation type="journal article" date="2000" name="Annu. Rev. Phytopathol.">
        <title>The photoactivated cercospora toxin cercosporin: contributions to plant disease and fundamental biology.</title>
        <authorList>
            <person name="Daub M.E."/>
            <person name="Ehrenshaft M."/>
        </authorList>
    </citation>
    <scope>REVIEW ON CERCOSPORIN</scope>
</reference>
<reference key="4">
    <citation type="journal article" date="2007" name="Fungal Genet. Biol.">
        <title>The Cercospora nicotianae gene encoding dual O-methyltransferase and FAD-dependent monooxygenase domains mediates cercosporin toxin biosynthesis.</title>
        <authorList>
            <person name="Dekkers K.L."/>
            <person name="You B.J."/>
            <person name="Gowda V.S."/>
            <person name="Liao H.L."/>
            <person name="Lee M.H."/>
            <person name="Bau H.J."/>
            <person name="Ueng P.P."/>
            <person name="Chung K.R."/>
        </authorList>
    </citation>
    <scope>FUNCTION</scope>
</reference>
<reference key="5">
    <citation type="journal article" date="2007" name="Microbiology (Mosc.)">
        <title>Functional characterization of three genes encoding putative oxidoreductases required for cercosporin toxin biosynthesis in the fungus Cercospora nicotianae.</title>
        <authorList>
            <person name="Chen H.Q."/>
            <person name="Lee M.H."/>
            <person name="Chung K.R."/>
        </authorList>
    </citation>
    <scope>FUNCTION</scope>
</reference>
<reference key="6">
    <citation type="journal article" date="2007" name="Mol. Microbiol.">
        <title>Molecular analysis of the cercosporin biosynthetic gene cluster in Cercospora nicotianae.</title>
        <authorList>
            <person name="Chen H."/>
            <person name="Lee M.H."/>
            <person name="Daub M.E."/>
            <person name="Chung K.R."/>
        </authorList>
    </citation>
    <scope>FUNCTION</scope>
    <scope>INDUCTION</scope>
    <scope>PATHWAY</scope>
</reference>
<reference key="7">
    <citation type="journal article" date="2012" name="Chem. Commun. (Camb.)">
        <title>Analysis of the cercosporin polyketide synthase CTB1 reveals a new fungal thioesterase function.</title>
        <authorList>
            <person name="Newman A.G."/>
            <person name="Vagstad A.L."/>
            <person name="Belecki K."/>
            <person name="Scheerer J.R."/>
            <person name="Townsend C.A."/>
        </authorList>
    </citation>
    <scope>FUNCTION</scope>
    <scope>CATALYTIC ACTIVITY</scope>
    <scope>DOMAIN</scope>
    <scope>PATHWAY</scope>
</reference>
<reference key="8">
    <citation type="journal article" date="2016" name="J. Am. Chem. Soc.">
        <title>Molecular characterization of the cercosporin biosynthetic pathway in the fungal plant pathogen Cercospora nicotianae.</title>
        <authorList>
            <person name="Newman A.G."/>
            <person name="Townsend C.A."/>
        </authorList>
    </citation>
    <scope>FUNCTION</scope>
    <scope>DISRUPTION PHENOTYPE</scope>
    <scope>PATHWAY</scope>
</reference>
<reference key="9">
    <citation type="journal article" date="2019" name="Chem. Sci.">
        <title>Heterologous biosynthesis of elsinochrome A sheds light on the formation of the photosensitive perylenequinone system.</title>
        <authorList>
            <person name="Hu J."/>
            <person name="Sarrami F."/>
            <person name="Li H."/>
            <person name="Zhang G."/>
            <person name="Stubbs K.A."/>
            <person name="Lacey E."/>
            <person name="Stewart S.G."/>
            <person name="Karton A."/>
            <person name="Piggott A.M."/>
            <person name="Chooi Y.H."/>
        </authorList>
    </citation>
    <scope>FUNCTION</scope>
</reference>
<reference evidence="22 23" key="10">
    <citation type="journal article" date="2018" name="Nat. Chem. Biol.">
        <title>The structural organization of substrate loading in iterative polyketide synthases.</title>
        <authorList>
            <person name="Herbst D.A."/>
            <person name="Huitt-Roehl C.R."/>
            <person name="Jakob R.P."/>
            <person name="Kravetz J.M."/>
            <person name="Storm P.A."/>
            <person name="Alley J.R."/>
            <person name="Townsend C.A."/>
            <person name="Maier T."/>
        </authorList>
    </citation>
    <scope>X-RAY CRYSTALLOGRAPHY (2.77 ANGSTROMS) OF 1-1293</scope>
    <scope>DOMAIN</scope>
    <scope>FUNCTION</scope>
</reference>
<evidence type="ECO:0000250" key="1">
    <source>
        <dbReference type="UniProtKB" id="Q0UHZ9"/>
    </source>
</evidence>
<evidence type="ECO:0000250" key="2">
    <source>
        <dbReference type="UniProtKB" id="Q9Y8A5"/>
    </source>
</evidence>
<evidence type="ECO:0000255" key="3"/>
<evidence type="ECO:0000255" key="4">
    <source>
        <dbReference type="PROSITE-ProRule" id="PRU00258"/>
    </source>
</evidence>
<evidence type="ECO:0000255" key="5">
    <source>
        <dbReference type="PROSITE-ProRule" id="PRU01348"/>
    </source>
</evidence>
<evidence type="ECO:0000255" key="6">
    <source>
        <dbReference type="PROSITE-ProRule" id="PRU01363"/>
    </source>
</evidence>
<evidence type="ECO:0000256" key="7">
    <source>
        <dbReference type="SAM" id="MobiDB-lite"/>
    </source>
</evidence>
<evidence type="ECO:0000269" key="8">
    <source>
    </source>
</evidence>
<evidence type="ECO:0000269" key="9">
    <source>
    </source>
</evidence>
<evidence type="ECO:0000269" key="10">
    <source>
    </source>
</evidence>
<evidence type="ECO:0000269" key="11">
    <source>
    </source>
</evidence>
<evidence type="ECO:0000269" key="12">
    <source>
    </source>
</evidence>
<evidence type="ECO:0000269" key="13">
    <source>
    </source>
</evidence>
<evidence type="ECO:0000269" key="14">
    <source>
    </source>
</evidence>
<evidence type="ECO:0000269" key="15">
    <source>
    </source>
</evidence>
<evidence type="ECO:0000269" key="16">
    <source>
    </source>
</evidence>
<evidence type="ECO:0000303" key="17">
    <source>
    </source>
</evidence>
<evidence type="ECO:0000303" key="18">
    <source>
    </source>
</evidence>
<evidence type="ECO:0000305" key="19">
    <source>
    </source>
</evidence>
<evidence type="ECO:0000305" key="20">
    <source>
    </source>
</evidence>
<evidence type="ECO:0000305" key="21">
    <source>
    </source>
</evidence>
<evidence type="ECO:0007744" key="22">
    <source>
        <dbReference type="PDB" id="6FIJ"/>
    </source>
</evidence>
<evidence type="ECO:0007744" key="23">
    <source>
        <dbReference type="PDB" id="6FIK"/>
    </source>
</evidence>
<evidence type="ECO:0007829" key="24">
    <source>
        <dbReference type="PDB" id="6FIJ"/>
    </source>
</evidence>
<evidence type="ECO:0007829" key="25">
    <source>
        <dbReference type="PDB" id="8CG5"/>
    </source>
</evidence>
<evidence type="ECO:0007829" key="26">
    <source>
        <dbReference type="PDB" id="8CG6"/>
    </source>
</evidence>
<feature type="chain" id="PRO_0000444965" description="Non-reducing polyketide synthase CTB1">
    <location>
        <begin position="1"/>
        <end position="2196"/>
    </location>
</feature>
<feature type="domain" description="Ketosynthase family 3 (KS3)" evidence="5 19 20 21">
    <location>
        <begin position="381"/>
        <end position="814"/>
    </location>
</feature>
<feature type="domain" description="PKS/mFAS DH" evidence="6">
    <location>
        <begin position="1302"/>
        <end position="1608"/>
    </location>
</feature>
<feature type="domain" description="Carrier 1" evidence="4 19 20 21">
    <location>
        <begin position="1671"/>
        <end position="1748"/>
    </location>
</feature>
<feature type="domain" description="Carrier 2" evidence="4 19 20 21">
    <location>
        <begin position="1775"/>
        <end position="1857"/>
    </location>
</feature>
<feature type="region of interest" description="N-terminal acylcarrier protein transacylase domain (SAT)" evidence="3 19 20 21">
    <location>
        <begin position="11"/>
        <end position="250"/>
    </location>
</feature>
<feature type="region of interest" description="Malonyl-CoA:ACP transacylase (MAT) domain" evidence="3 19 20 21">
    <location>
        <begin position="922"/>
        <end position="1223"/>
    </location>
</feature>
<feature type="region of interest" description="Product template (PT) domain" evidence="3 19 20 21">
    <location>
        <begin position="1298"/>
        <end position="1611"/>
    </location>
</feature>
<feature type="region of interest" description="N-terminal hotdog fold" evidence="6">
    <location>
        <begin position="1302"/>
        <end position="1441"/>
    </location>
</feature>
<feature type="region of interest" description="C-terminal hotdog fold" evidence="6">
    <location>
        <begin position="1460"/>
        <end position="1608"/>
    </location>
</feature>
<feature type="region of interest" description="Disordered" evidence="7">
    <location>
        <begin position="1617"/>
        <end position="1666"/>
    </location>
</feature>
<feature type="region of interest" description="Disordered" evidence="7">
    <location>
        <begin position="1856"/>
        <end position="1923"/>
    </location>
</feature>
<feature type="region of interest" description="Thioesterase (TE) domain" evidence="3 19 20 21">
    <location>
        <begin position="1937"/>
        <end position="2187"/>
    </location>
</feature>
<feature type="compositionally biased region" description="Basic and acidic residues" evidence="7">
    <location>
        <begin position="1623"/>
        <end position="1636"/>
    </location>
</feature>
<feature type="compositionally biased region" description="Polar residues" evidence="7">
    <location>
        <begin position="1856"/>
        <end position="1867"/>
    </location>
</feature>
<feature type="compositionally biased region" description="Low complexity" evidence="7">
    <location>
        <begin position="1872"/>
        <end position="1887"/>
    </location>
</feature>
<feature type="active site" description="For beta-ketoacyl synthase activity" evidence="5">
    <location>
        <position position="553"/>
    </location>
</feature>
<feature type="active site" description="For beta-ketoacyl synthase activity" evidence="5">
    <location>
        <position position="688"/>
    </location>
</feature>
<feature type="active site" description="For beta-ketoacyl synthase activity" evidence="5">
    <location>
        <position position="733"/>
    </location>
</feature>
<feature type="active site" description="Proton acceptor; for dehydratase activity" evidence="6">
    <location>
        <position position="1335"/>
    </location>
</feature>
<feature type="active site" description="Proton donor; for dehydratase activity" evidence="6">
    <location>
        <position position="1520"/>
    </location>
</feature>
<feature type="modified residue" description="O-(pantetheine 4'-phosphoryl)serine" evidence="4">
    <location>
        <position position="1708"/>
    </location>
</feature>
<feature type="modified residue" description="O-(pantetheine 4'-phosphoryl)serine" evidence="4">
    <location>
        <position position="1816"/>
    </location>
</feature>
<feature type="strand" evidence="25">
    <location>
        <begin position="6"/>
        <end position="12"/>
    </location>
</feature>
<feature type="helix" evidence="25">
    <location>
        <begin position="20"/>
        <end position="27"/>
    </location>
</feature>
<feature type="helix" evidence="25">
    <location>
        <begin position="33"/>
        <end position="50"/>
    </location>
</feature>
<feature type="helix" evidence="25">
    <location>
        <begin position="55"/>
        <end position="60"/>
    </location>
</feature>
<feature type="helix" evidence="25">
    <location>
        <begin position="67"/>
        <end position="69"/>
    </location>
</feature>
<feature type="helix" evidence="25">
    <location>
        <begin position="70"/>
        <end position="76"/>
    </location>
</feature>
<feature type="helix" evidence="25">
    <location>
        <begin position="81"/>
        <end position="101"/>
    </location>
</feature>
<feature type="turn" evidence="25">
    <location>
        <begin position="110"/>
        <end position="112"/>
    </location>
</feature>
<feature type="strand" evidence="25">
    <location>
        <begin position="113"/>
        <end position="117"/>
    </location>
</feature>
<feature type="strand" evidence="26">
    <location>
        <begin position="118"/>
        <end position="120"/>
    </location>
</feature>
<feature type="helix" evidence="25">
    <location>
        <begin position="121"/>
        <end position="129"/>
    </location>
</feature>
<feature type="helix" evidence="25">
    <location>
        <begin position="134"/>
        <end position="162"/>
    </location>
</feature>
<feature type="helix" evidence="26">
    <location>
        <begin position="167"/>
        <end position="169"/>
    </location>
</feature>
<feature type="strand" evidence="25">
    <location>
        <begin position="176"/>
        <end position="183"/>
    </location>
</feature>
<feature type="helix" evidence="25">
    <location>
        <begin position="185"/>
        <end position="198"/>
    </location>
</feature>
<feature type="helix" evidence="24">
    <location>
        <begin position="203"/>
        <end position="205"/>
    </location>
</feature>
<feature type="strand" evidence="25">
    <location>
        <begin position="208"/>
        <end position="214"/>
    </location>
</feature>
<feature type="strand" evidence="25">
    <location>
        <begin position="217"/>
        <end position="221"/>
    </location>
</feature>
<feature type="helix" evidence="25">
    <location>
        <begin position="224"/>
        <end position="231"/>
    </location>
</feature>
<feature type="strand" evidence="25">
    <location>
        <begin position="239"/>
        <end position="243"/>
    </location>
</feature>
<feature type="turn" evidence="25">
    <location>
        <begin position="252"/>
        <end position="254"/>
    </location>
</feature>
<feature type="helix" evidence="25">
    <location>
        <begin position="257"/>
        <end position="263"/>
    </location>
</feature>
<feature type="helix" evidence="24">
    <location>
        <begin position="264"/>
        <end position="266"/>
    </location>
</feature>
<feature type="strand" evidence="25">
    <location>
        <begin position="285"/>
        <end position="290"/>
    </location>
</feature>
<feature type="helix" evidence="25">
    <location>
        <begin position="295"/>
        <end position="307"/>
    </location>
</feature>
<feature type="helix" evidence="25">
    <location>
        <begin position="313"/>
        <end position="315"/>
    </location>
</feature>
<feature type="helix" evidence="25">
    <location>
        <begin position="316"/>
        <end position="327"/>
    </location>
</feature>
<feature type="strand" evidence="25">
    <location>
        <begin position="331"/>
        <end position="338"/>
    </location>
</feature>
<feature type="helix" evidence="25">
    <location>
        <begin position="342"/>
        <end position="344"/>
    </location>
</feature>
<feature type="helix" evidence="25">
    <location>
        <begin position="345"/>
        <end position="351"/>
    </location>
</feature>
<feature type="helix" evidence="25">
    <location>
        <begin position="362"/>
        <end position="365"/>
    </location>
</feature>
<feature type="strand" evidence="25">
    <location>
        <begin position="374"/>
        <end position="376"/>
    </location>
</feature>
<feature type="strand" evidence="26">
    <location>
        <begin position="379"/>
        <end position="381"/>
    </location>
</feature>
<feature type="strand" evidence="25">
    <location>
        <begin position="384"/>
        <end position="393"/>
    </location>
</feature>
<feature type="strand" evidence="25">
    <location>
        <begin position="396"/>
        <end position="398"/>
    </location>
</feature>
<feature type="helix" evidence="25">
    <location>
        <begin position="399"/>
        <end position="408"/>
    </location>
</feature>
<feature type="strand" evidence="26">
    <location>
        <begin position="414"/>
        <end position="416"/>
    </location>
</feature>
<feature type="turn" evidence="25">
    <location>
        <begin position="418"/>
        <end position="420"/>
    </location>
</feature>
<feature type="helix" evidence="25">
    <location>
        <begin position="423"/>
        <end position="426"/>
    </location>
</feature>
<feature type="strand" evidence="25">
    <location>
        <begin position="441"/>
        <end position="443"/>
    </location>
</feature>
<feature type="turn" evidence="25">
    <location>
        <begin position="446"/>
        <end position="449"/>
    </location>
</feature>
<feature type="turn" evidence="25">
    <location>
        <begin position="453"/>
        <end position="457"/>
    </location>
</feature>
<feature type="turn" evidence="25">
    <location>
        <begin position="460"/>
        <end position="462"/>
    </location>
</feature>
<feature type="helix" evidence="25">
    <location>
        <begin position="463"/>
        <end position="465"/>
    </location>
</feature>
<feature type="helix" evidence="25">
    <location>
        <begin position="468"/>
        <end position="483"/>
    </location>
</feature>
<feature type="helix" evidence="25">
    <location>
        <begin position="492"/>
        <end position="494"/>
    </location>
</feature>
<feature type="helix" evidence="25">
    <location>
        <begin position="496"/>
        <end position="498"/>
    </location>
</feature>
<feature type="strand" evidence="25">
    <location>
        <begin position="499"/>
        <end position="504"/>
    </location>
</feature>
<feature type="helix" evidence="25">
    <location>
        <begin position="509"/>
        <end position="513"/>
    </location>
</feature>
<feature type="helix" evidence="25">
    <location>
        <begin position="515"/>
        <end position="517"/>
    </location>
</feature>
<feature type="helix" evidence="25">
    <location>
        <begin position="523"/>
        <end position="527"/>
    </location>
</feature>
<feature type="helix" evidence="25">
    <location>
        <begin position="531"/>
        <end position="540"/>
    </location>
</feature>
<feature type="strand" evidence="25">
    <location>
        <begin position="546"/>
        <end position="549"/>
    </location>
</feature>
<feature type="helix" evidence="24">
    <location>
        <begin position="552"/>
        <end position="554"/>
    </location>
</feature>
<feature type="helix" evidence="25">
    <location>
        <begin position="555"/>
        <end position="568"/>
    </location>
</feature>
<feature type="strand" evidence="25">
    <location>
        <begin position="573"/>
        <end position="579"/>
    </location>
</feature>
<feature type="helix" evidence="25">
    <location>
        <begin position="586"/>
        <end position="594"/>
    </location>
</feature>
<feature type="strand" evidence="25">
    <location>
        <begin position="600"/>
        <end position="603"/>
    </location>
</feature>
<feature type="strand" evidence="26">
    <location>
        <begin position="607"/>
        <end position="609"/>
    </location>
</feature>
<feature type="strand" evidence="25">
    <location>
        <begin position="620"/>
        <end position="627"/>
    </location>
</feature>
<feature type="helix" evidence="25">
    <location>
        <begin position="628"/>
        <end position="633"/>
    </location>
</feature>
<feature type="strand" evidence="25">
    <location>
        <begin position="640"/>
        <end position="649"/>
    </location>
</feature>
<feature type="strand" evidence="25">
    <location>
        <begin position="653"/>
        <end position="658"/>
    </location>
</feature>
<feature type="helix" evidence="25">
    <location>
        <begin position="661"/>
        <end position="675"/>
    </location>
</feature>
<feature type="helix" evidence="25">
    <location>
        <begin position="679"/>
        <end position="681"/>
    </location>
</feature>
<feature type="strand" evidence="25">
    <location>
        <begin position="682"/>
        <end position="686"/>
    </location>
</feature>
<feature type="helix" evidence="25">
    <location>
        <begin position="693"/>
        <end position="707"/>
    </location>
</feature>
<feature type="strand" evidence="25">
    <location>
        <begin position="714"/>
        <end position="716"/>
    </location>
</feature>
<feature type="strand" evidence="25">
    <location>
        <begin position="722"/>
        <end position="725"/>
    </location>
</feature>
<feature type="helix" evidence="25">
    <location>
        <begin position="728"/>
        <end position="731"/>
    </location>
</feature>
<feature type="strand" evidence="25">
    <location>
        <begin position="735"/>
        <end position="737"/>
    </location>
</feature>
<feature type="helix" evidence="25">
    <location>
        <begin position="738"/>
        <end position="752"/>
    </location>
</feature>
<feature type="strand" evidence="24">
    <location>
        <begin position="762"/>
        <end position="765"/>
    </location>
</feature>
<feature type="helix" evidence="25">
    <location>
        <begin position="773"/>
        <end position="775"/>
    </location>
</feature>
<feature type="strand" evidence="25">
    <location>
        <begin position="795"/>
        <end position="801"/>
    </location>
</feature>
<feature type="strand" evidence="25">
    <location>
        <begin position="803"/>
        <end position="813"/>
    </location>
</feature>
<feature type="strand" evidence="25">
    <location>
        <begin position="830"/>
        <end position="838"/>
    </location>
</feature>
<feature type="helix" evidence="25">
    <location>
        <begin position="839"/>
        <end position="855"/>
    </location>
</feature>
<feature type="turn" evidence="25">
    <location>
        <begin position="856"/>
        <end position="858"/>
    </location>
</feature>
<feature type="helix" evidence="25">
    <location>
        <begin position="863"/>
        <end position="872"/>
    </location>
</feature>
<feature type="strand" evidence="25">
    <location>
        <begin position="879"/>
        <end position="888"/>
    </location>
</feature>
<feature type="helix" evidence="25">
    <location>
        <begin position="889"/>
        <end position="905"/>
    </location>
</feature>
<feature type="strand" evidence="25">
    <location>
        <begin position="919"/>
        <end position="923"/>
    </location>
</feature>
<feature type="strand" evidence="25">
    <location>
        <begin position="926"/>
        <end position="928"/>
    </location>
</feature>
<feature type="turn" evidence="25">
    <location>
        <begin position="931"/>
        <end position="934"/>
    </location>
</feature>
<feature type="helix" evidence="25">
    <location>
        <begin position="935"/>
        <end position="940"/>
    </location>
</feature>
<feature type="helix" evidence="25">
    <location>
        <begin position="942"/>
        <end position="957"/>
    </location>
</feature>
<feature type="helix" evidence="25">
    <location>
        <begin position="965"/>
        <end position="968"/>
    </location>
</feature>
<feature type="helix" evidence="24">
    <location>
        <begin position="971"/>
        <end position="973"/>
    </location>
</feature>
<feature type="helix" evidence="25">
    <location>
        <begin position="978"/>
        <end position="998"/>
    </location>
</feature>
<feature type="strand" evidence="25">
    <location>
        <begin position="1003"/>
        <end position="1007"/>
    </location>
</feature>
<feature type="helix" evidence="25">
    <location>
        <begin position="1012"/>
        <end position="1019"/>
    </location>
</feature>
<feature type="helix" evidence="25">
    <location>
        <begin position="1025"/>
        <end position="1042"/>
    </location>
</feature>
<feature type="strand" evidence="25">
    <location>
        <begin position="1045"/>
        <end position="1055"/>
    </location>
</feature>
<feature type="helix" evidence="25">
    <location>
        <begin position="1057"/>
        <end position="1063"/>
    </location>
</feature>
<feature type="strand" evidence="25">
    <location>
        <begin position="1064"/>
        <end position="1066"/>
    </location>
</feature>
<feature type="turn" evidence="25">
    <location>
        <begin position="1068"/>
        <end position="1070"/>
    </location>
</feature>
<feature type="strand" evidence="25">
    <location>
        <begin position="1073"/>
        <end position="1076"/>
    </location>
</feature>
<feature type="strand" evidence="25">
    <location>
        <begin position="1079"/>
        <end position="1081"/>
    </location>
</feature>
<feature type="strand" evidence="25">
    <location>
        <begin position="1083"/>
        <end position="1088"/>
    </location>
</feature>
<feature type="helix" evidence="25">
    <location>
        <begin position="1089"/>
        <end position="1100"/>
    </location>
</feature>
<feature type="strand" evidence="25">
    <location>
        <begin position="1106"/>
        <end position="1108"/>
    </location>
</feature>
<feature type="strand" evidence="25">
    <location>
        <begin position="1115"/>
        <end position="1117"/>
    </location>
</feature>
<feature type="helix" evidence="25">
    <location>
        <begin position="1118"/>
        <end position="1123"/>
    </location>
</feature>
<feature type="helix" evidence="25">
    <location>
        <begin position="1124"/>
        <end position="1131"/>
    </location>
</feature>
<feature type="strand" evidence="25">
    <location>
        <begin position="1143"/>
        <end position="1145"/>
    </location>
</feature>
<feature type="turn" evidence="25">
    <location>
        <begin position="1146"/>
        <end position="1149"/>
    </location>
</feature>
<feature type="strand" evidence="25">
    <location>
        <begin position="1150"/>
        <end position="1152"/>
    </location>
</feature>
<feature type="helix" evidence="25">
    <location>
        <begin position="1155"/>
        <end position="1157"/>
    </location>
</feature>
<feature type="helix" evidence="25">
    <location>
        <begin position="1160"/>
        <end position="1168"/>
    </location>
</feature>
<feature type="helix" evidence="25">
    <location>
        <begin position="1173"/>
        <end position="1183"/>
    </location>
</feature>
<feature type="strand" evidence="25">
    <location>
        <begin position="1190"/>
        <end position="1200"/>
    </location>
</feature>
<feature type="helix" evidence="25">
    <location>
        <begin position="1201"/>
        <end position="1209"/>
    </location>
</feature>
<feature type="strand" evidence="24">
    <location>
        <begin position="1214"/>
        <end position="1218"/>
    </location>
</feature>
<feature type="strand" evidence="25">
    <location>
        <begin position="1221"/>
        <end position="1223"/>
    </location>
</feature>
<feature type="helix" evidence="25">
    <location>
        <begin position="1225"/>
        <end position="1239"/>
    </location>
</feature>
<feature type="helix" evidence="25">
    <location>
        <begin position="1245"/>
        <end position="1249"/>
    </location>
</feature>
<feature type="helix" evidence="25">
    <location>
        <begin position="1253"/>
        <end position="1255"/>
    </location>
</feature>
<feature type="helix" evidence="25">
    <location>
        <begin position="1279"/>
        <end position="1281"/>
    </location>
</feature>
<feature type="helix" evidence="25">
    <location>
        <begin position="1782"/>
        <end position="1796"/>
    </location>
</feature>
<feature type="strand" evidence="25">
    <location>
        <begin position="1800"/>
        <end position="1806"/>
    </location>
</feature>
<feature type="helix" evidence="25">
    <location>
        <begin position="1809"/>
        <end position="1812"/>
    </location>
</feature>
<feature type="helix" evidence="25">
    <location>
        <begin position="1816"/>
        <end position="1829"/>
    </location>
</feature>
<feature type="turn" evidence="25">
    <location>
        <begin position="1838"/>
        <end position="1842"/>
    </location>
</feature>
<feature type="helix" evidence="25">
    <location>
        <begin position="1846"/>
        <end position="1854"/>
    </location>
</feature>
<name>CTB1_CERNC</name>
<sequence>MEDGAQMRVVAFGDQTYDCSEAVSQLLRVRDDAIVVDFLERAPAVLKAELARLSSEQQEETPRFATLAELVPRYRAGTLNPAVSQALTCIAQLGLFIRQHSSGQEAYPTAHDSCITGVCTGALTAVAVGSASSVTALVPLALHTVAVAVRLGARAWEIGSCLADARRGANGRYASWTSAVGGISPQDLQDRISAYTAEQALASVSVPYLSAAVGPGQSSVSAAPVILDAFLSTLLRPLTTTRLPITAPYHAPHLFTAKDVQHVTDCLPPSEAWPTVRIPIISFSRDEAVSRGASFPAAMSEAVRDCLIRPIALDRMAVSITNHARDLGKDSVLPSPIALSFSDKLGPQVNSHLPGAKAPTPELTSKSIPSAIGAEQQPMAKSPIAILAASGRFPQSSSMDQFWDVLINGVDTHELVPPTRWNAATHVSEDPKAKNVSGTGFGCWLHEAGEFDAAYFNMSPREAPQVDPAQRLALLTATEALEQAGVVPNRTSSTQKNRVGVWYGATSNDWMETNSAQNVDTYFIPGGNRAFIPGRVNYFHKFSGPSYTIDTACSSSLAALHMACNALWRGEVDTAIVGGTNVLTNPDMTAGLDAGHFLSRSGNCKTFDDEADGYCRGEAVVTLILKRLPDAQADKDPIQASILGIATNHSAEAASITRPHAGAQQDLFQQVLTETGLTANDISVCEMHGTGTQAGDSGETTSVVETLAPLNRSGSAVRTTPLYIGAVKSNVGHAESAAGVSSLAKILLMLKHSKIPPHVGIKTKLNHRLPDLAARNTHIARSEVPWPRPKNGKRRVLLNNFSAAGGNTCLVLEDAPEPEDSQEVDPREHHIVALSAKTPDSMVNNLTNMITWIDKHSGDSLATLPQLSYTTTARRVHHRHRAVATGTDLLQIRSSLQEQLDRRVSGERSIPHPPNGPSFVLAFTGQGSAFAGMGVDLYKRFASFRSDIARYDQICEGMSLPSIKAMFEDEKVFSTASPTLQQLTHVCFQMALYRLWKSLGVQAKAVVGHSLGEYAALYAAGVLSQSDTLYLVGRRAQLMEKHLSQGTHAMLAVRAKEEAIVAAIDGPPGEAYEFSCRNGEQRNVLGGTVAQIQAAKAALEAKKIRCQYLDTPMAFHTGQVDPILPELLQVAAACSIQDPQIPVISPAYGKVIRSAKDFQPEYFTHHCRSSVNMVDALQSAVEEGLLDKNVIGLEIGPGPVVTQFVKEAVGTTMQTFASINKDKDTWQLMTQALAKFYLAGASVEWSRYHEDFPGAQKVLELPAYGWALKNYWLQYVNDWSLRKGDPAVVVAASNLELSSSIHKVITNTITANSDGELVVDADLSREDLHPMVQGHQVYGVPLCTPSVYADIALTLGEYIRQVIKPGEVAQTSVEVAEMNIQSALVANNTGRVQLLRTCAKFDPKAQVASCTFSSIVEQHANCKIRFGSLEKEKTALKSAALAAQASMAALKTQVGQDDNTYRFSKGMIYKMIGQLADFDEKYRGLCAITLDNDAMEASGKVSFKGIPNEGKFHSSPAYLDALSQLGGFVMNANEGVDLEKEVFVNHGWGSMRFFAALDPAMTYYTHVKMTQGKDKLWTGDVLIFDDKQALIGIVGGVALQGVPKRLMHYIVTAANKKASGPPTEKKTSSPPVEKKASAPVAPTRPAIQRKNASIPPPATQVTPQNKTIKTPSVSALIAPALEIVSEEIRMPIDELKDDIDFTDAGLDSLLSLVISSRMRDQLGIEFESAQFMEIGSIGGLKEFLTRLSPPVAVAVATAVEIVKEEALTSLEELTDPSPNEIGTVWRDALKILSEESGLTDEELTDDTSFADVGVDSLMSLVITSRLRDELDIDFPDRALFEECQTIFDLRKRFSGSTESFDSTTTKPSAGDATPPLTDSSASSPPSSEFDGETPMTDLDEVFDSPPAQKRIPSPPKGRIPPAWSMYLQGSQKRSKEILFLFPDGAGAATSYLSLPRLGEDIGVVAFNSPFMKTPHKFADHTLPDVIASYVEGIRGRQAQGPYHLGGWSAGGILAYAVAQELIAAGEEVSTLLLIDSPSPTKGLDRLPTRFFDHCTNVGLFGTELSRGSGGPNKTPEWLMPHFRASIELLHGYHAPPMKLGNKTKVMVIWAGECAFDGVRYAHIPPSAGDTDEDTEGMKFLTEKRKDFGATEWASLFPGTDVDARVVESEHHFSMMRDSGAQMLVEHMRDGLGIVSS</sequence>
<gene>
    <name evidence="18" type="primary">CTB1</name>
</gene>
<comment type="function">
    <text evidence="1 8 9 10 12 13 14 15 16 17">Polyketide synthase; part of the gene cluster that mediates the biosynthesis of cercosporin, a light-activated, non-host-selective toxin (PubMed:12937958, PubMed:15915645, PubMed:26938470, PubMed:29610486). The perylenequinone chromophore of cercosporin absorbs light energy to attain an electronically-activated triplet state and produces active oxygen species such as the hydroxyl radical, superoxide, hydrogen peroxide or singlet oxygen upon reaction with oxygen molecules (PubMed:11701851). These reactive oxygen species cause damage to various cellular components including lipids, proteins and nucleic acids (PubMed:11701851). The first step of cercosporin biosynthesis is performed by the polyketide synthase CTB1 which catalyzes the formation of nor-toralactone (PubMed:23108075, PubMed:26938470, PubMed:29610486). The starter unit acyltransferase (SAT) domain of CTB1 initiates polyketide extension by the selective utilization of acetyl-CoA, which is elongated to the heptaketide in the beta-ketoacyl synthase (KS) domain by successive condensations with six malonyl units introduced by the malonyl acyltransferase (MAT) domain. The product template (PT) domain catalyzes C4-C9 and C2-C11 aldol cyclizations and dehydrations to a trihydroxynaphthalene, which is thought to be delivered to the thioesterase (TE) domain for product release (PubMed:23108075, PubMed:29610486). The bifunctional enzyme CTB3 then methylates nor-toralactone to toralactone before conducting an unusual oxidative aromatic ring opening (PubMed:17074519, PubMed:26938470). The O-methyltransferase CTB2 further methylates the nascent OH-6 of the CBT3 product, blocking further oxidation at this site before the reductase CTB6 reduces the 2-oxopropyl ketone at position C7, giving naphthalene (PubMed:17660442, PubMed:26938470). The FAD-dependent monooxygenase CTB5 in concert with the multicopper oxidase CTB12 are responsible for homodimerization of naphthalene with CTB7 installing the dioxepine moiety, finally producing cercosporin (PubMed:17660442, PubMed:26938470, PubMed:30809363). The fasciclin domain-containing protein CTB11 might act with CTB5 and CTB12 whereas the roles of CTB9 and CTB10 have still to be elucidated (By similarity).</text>
</comment>
<comment type="catalytic activity">
    <reaction evidence="13">
        <text>6 malonyl-CoA + acetyl-CoA + 6 H(+) = nor-toralactone + 6 CO2 + 7 CoA + 2 H2O</text>
        <dbReference type="Rhea" id="RHEA:62892"/>
        <dbReference type="ChEBI" id="CHEBI:15377"/>
        <dbReference type="ChEBI" id="CHEBI:15378"/>
        <dbReference type="ChEBI" id="CHEBI:16526"/>
        <dbReference type="ChEBI" id="CHEBI:57287"/>
        <dbReference type="ChEBI" id="CHEBI:57288"/>
        <dbReference type="ChEBI" id="CHEBI:57384"/>
        <dbReference type="ChEBI" id="CHEBI:146018"/>
    </reaction>
    <physiologicalReaction direction="left-to-right" evidence="13">
        <dbReference type="Rhea" id="RHEA:62893"/>
    </physiologicalReaction>
</comment>
<comment type="cofactor">
    <cofactor evidence="2">
        <name>pantetheine 4'-phosphate</name>
        <dbReference type="ChEBI" id="CHEBI:47942"/>
    </cofactor>
    <text evidence="2">Binds 1 phosphopantetheine covalently.</text>
</comment>
<comment type="pathway">
    <text evidence="8 9 11 13 14">Mycotoxin biosynthesis.</text>
</comment>
<comment type="induction">
    <text evidence="11">Expression is positively regulated by the cercosporin cluster-specific transcription factor CTB8 (PubMed:17462021). Expression is also affected by nitrogen and carbon sources and pH, and is also controlled by another transcription activator, CRG1, previously shown to regulate cercosporin production and resistance (PubMed:17462021).</text>
</comment>
<comment type="domain">
    <text evidence="19 20 21">Multidomain protein; including a starter unit:ACP transacylase (SAT) that selects the starter unit; a ketosynthase (KS) that catalyzes repeated decarboxylative condensation to elongate the polyketide backbone; a malonyl-CoA:ACP transacylase (MAT) that selects and transfers the extender unit malonyl-CoA; a product template (PT) domain that controls the immediate cyclization regioselectivity of the reactive polyketide backbone; 2 acyl-carrier protein (ACP) domains that serve as the tether of the growing and completed polyketide via its phosphopantetheinyl arm; and a C-terminal thioesterase (TE) domain that facilitates the release of the final product from the enzyme.</text>
</comment>
<comment type="disruption phenotype">
    <text evidence="8 9 14">Abolishes the production of cercosporin (PubMed:12937958, PubMed:15915645, PubMed:26938470). Does not display any pigmentation (PubMed:26938470). Leads to fewer necrotic lesions on inoculated tobacco leaves compared with the wild type (PubMed:15915645).</text>
</comment>
<dbReference type="EC" id="2.3.1.-" evidence="13"/>
<dbReference type="EMBL" id="AY649543">
    <property type="protein sequence ID" value="AAT69682.1"/>
    <property type="molecule type" value="mRNA"/>
</dbReference>
<dbReference type="PDB" id="6FIJ">
    <property type="method" value="X-ray"/>
    <property type="resolution" value="2.77 A"/>
    <property type="chains" value="A/B=1-1293"/>
</dbReference>
<dbReference type="PDB" id="6FIK">
    <property type="method" value="EM"/>
    <property type="resolution" value="7.10 A"/>
    <property type="chains" value="A/B=1-1293, C=1775-1858"/>
</dbReference>
<dbReference type="PDB" id="8BY8">
    <property type="method" value="EM"/>
    <property type="resolution" value="2.50 A"/>
    <property type="chains" value="A/B=1-1293"/>
</dbReference>
<dbReference type="PDB" id="8CG5">
    <property type="method" value="EM"/>
    <property type="resolution" value="2.70 A"/>
    <property type="chains" value="A/B=1-1293, C=1775-1858"/>
</dbReference>
<dbReference type="PDB" id="8CG6">
    <property type="method" value="EM"/>
    <property type="resolution" value="3.40 A"/>
    <property type="chains" value="A/B=1-1293, C=1775-1858"/>
</dbReference>
<dbReference type="PDBsum" id="6FIJ"/>
<dbReference type="PDBsum" id="6FIK"/>
<dbReference type="PDBsum" id="8BY8"/>
<dbReference type="PDBsum" id="8CG5"/>
<dbReference type="PDBsum" id="8CG6"/>
<dbReference type="EMDB" id="EMD-16324"/>
<dbReference type="EMDB" id="EMD-16631"/>
<dbReference type="EMDB" id="EMD-16632"/>
<dbReference type="EMDB" id="EMD-4266"/>
<dbReference type="SMR" id="Q6DQW3"/>
<dbReference type="ESTHER" id="cernc-q6dqw3">
    <property type="family name" value="Thioesterase"/>
</dbReference>
<dbReference type="PHI-base" id="PHI:433"/>
<dbReference type="GO" id="GO:0004315">
    <property type="term" value="F:3-oxoacyl-[acyl-carrier-protein] synthase activity"/>
    <property type="evidence" value="ECO:0007669"/>
    <property type="project" value="InterPro"/>
</dbReference>
<dbReference type="GO" id="GO:0004312">
    <property type="term" value="F:fatty acid synthase activity"/>
    <property type="evidence" value="ECO:0007669"/>
    <property type="project" value="TreeGrafter"/>
</dbReference>
<dbReference type="GO" id="GO:0031177">
    <property type="term" value="F:phosphopantetheine binding"/>
    <property type="evidence" value="ECO:0007669"/>
    <property type="project" value="InterPro"/>
</dbReference>
<dbReference type="GO" id="GO:0006633">
    <property type="term" value="P:fatty acid biosynthetic process"/>
    <property type="evidence" value="ECO:0007669"/>
    <property type="project" value="InterPro"/>
</dbReference>
<dbReference type="GO" id="GO:0044550">
    <property type="term" value="P:secondary metabolite biosynthetic process"/>
    <property type="evidence" value="ECO:0007669"/>
    <property type="project" value="TreeGrafter"/>
</dbReference>
<dbReference type="CDD" id="cd00833">
    <property type="entry name" value="PKS"/>
    <property type="match status" value="1"/>
</dbReference>
<dbReference type="FunFam" id="1.10.1200.10:FF:000011">
    <property type="entry name" value="Sterigmatocystin biosynthesis polyketide synthase"/>
    <property type="match status" value="1"/>
</dbReference>
<dbReference type="Gene3D" id="3.30.70.3290">
    <property type="match status" value="1"/>
</dbReference>
<dbReference type="Gene3D" id="3.40.47.10">
    <property type="match status" value="1"/>
</dbReference>
<dbReference type="Gene3D" id="1.10.1200.10">
    <property type="entry name" value="ACP-like"/>
    <property type="match status" value="2"/>
</dbReference>
<dbReference type="Gene3D" id="3.40.50.1820">
    <property type="entry name" value="alpha/beta hydrolase"/>
    <property type="match status" value="1"/>
</dbReference>
<dbReference type="Gene3D" id="3.40.366.10">
    <property type="entry name" value="Malonyl-Coenzyme A Acyl Carrier Protein, domain 2"/>
    <property type="match status" value="2"/>
</dbReference>
<dbReference type="Gene3D" id="3.10.129.110">
    <property type="entry name" value="Polyketide synthase dehydratase"/>
    <property type="match status" value="1"/>
</dbReference>
<dbReference type="InterPro" id="IPR029058">
    <property type="entry name" value="AB_hydrolase_fold"/>
</dbReference>
<dbReference type="InterPro" id="IPR001227">
    <property type="entry name" value="Ac_transferase_dom_sf"/>
</dbReference>
<dbReference type="InterPro" id="IPR036736">
    <property type="entry name" value="ACP-like_sf"/>
</dbReference>
<dbReference type="InterPro" id="IPR014043">
    <property type="entry name" value="Acyl_transferase_dom"/>
</dbReference>
<dbReference type="InterPro" id="IPR016035">
    <property type="entry name" value="Acyl_Trfase/lysoPLipase"/>
</dbReference>
<dbReference type="InterPro" id="IPR018201">
    <property type="entry name" value="Ketoacyl_synth_AS"/>
</dbReference>
<dbReference type="InterPro" id="IPR014031">
    <property type="entry name" value="Ketoacyl_synth_C"/>
</dbReference>
<dbReference type="InterPro" id="IPR014030">
    <property type="entry name" value="Ketoacyl_synth_N"/>
</dbReference>
<dbReference type="InterPro" id="IPR016036">
    <property type="entry name" value="Malonyl_transacylase_ACP-bd"/>
</dbReference>
<dbReference type="InterPro" id="IPR020841">
    <property type="entry name" value="PKS_Beta-ketoAc_synthase_dom"/>
</dbReference>
<dbReference type="InterPro" id="IPR042104">
    <property type="entry name" value="PKS_dehydratase_sf"/>
</dbReference>
<dbReference type="InterPro" id="IPR049900">
    <property type="entry name" value="PKS_mFAS_DH"/>
</dbReference>
<dbReference type="InterPro" id="IPR050091">
    <property type="entry name" value="PKS_NRPS_Biosynth_Enz"/>
</dbReference>
<dbReference type="InterPro" id="IPR020806">
    <property type="entry name" value="PKS_PP-bd"/>
</dbReference>
<dbReference type="InterPro" id="IPR020802">
    <property type="entry name" value="PKS_thioesterase"/>
</dbReference>
<dbReference type="InterPro" id="IPR009081">
    <property type="entry name" value="PP-bd_ACP"/>
</dbReference>
<dbReference type="InterPro" id="IPR030918">
    <property type="entry name" value="PT_fungal_PKS"/>
</dbReference>
<dbReference type="InterPro" id="IPR032088">
    <property type="entry name" value="SAT"/>
</dbReference>
<dbReference type="InterPro" id="IPR001031">
    <property type="entry name" value="Thioesterase"/>
</dbReference>
<dbReference type="InterPro" id="IPR016039">
    <property type="entry name" value="Thiolase-like"/>
</dbReference>
<dbReference type="NCBIfam" id="TIGR04532">
    <property type="entry name" value="PT_fungal_PKS"/>
    <property type="match status" value="1"/>
</dbReference>
<dbReference type="PANTHER" id="PTHR43775">
    <property type="entry name" value="FATTY ACID SYNTHASE"/>
    <property type="match status" value="1"/>
</dbReference>
<dbReference type="PANTHER" id="PTHR43775:SF40">
    <property type="entry name" value="NORSOLORINIC ACID SYNTHASE STCA"/>
    <property type="match status" value="1"/>
</dbReference>
<dbReference type="Pfam" id="PF00698">
    <property type="entry name" value="Acyl_transf_1"/>
    <property type="match status" value="1"/>
</dbReference>
<dbReference type="Pfam" id="PF22621">
    <property type="entry name" value="CurL-like_PKS_C"/>
    <property type="match status" value="1"/>
</dbReference>
<dbReference type="Pfam" id="PF00109">
    <property type="entry name" value="ketoacyl-synt"/>
    <property type="match status" value="1"/>
</dbReference>
<dbReference type="Pfam" id="PF02801">
    <property type="entry name" value="Ketoacyl-synt_C"/>
    <property type="match status" value="1"/>
</dbReference>
<dbReference type="Pfam" id="PF00550">
    <property type="entry name" value="PP-binding"/>
    <property type="match status" value="2"/>
</dbReference>
<dbReference type="Pfam" id="PF16073">
    <property type="entry name" value="SAT"/>
    <property type="match status" value="1"/>
</dbReference>
<dbReference type="Pfam" id="PF00975">
    <property type="entry name" value="Thioesterase"/>
    <property type="match status" value="1"/>
</dbReference>
<dbReference type="SMART" id="SM00827">
    <property type="entry name" value="PKS_AT"/>
    <property type="match status" value="1"/>
</dbReference>
<dbReference type="SMART" id="SM00825">
    <property type="entry name" value="PKS_KS"/>
    <property type="match status" value="1"/>
</dbReference>
<dbReference type="SMART" id="SM00823">
    <property type="entry name" value="PKS_PP"/>
    <property type="match status" value="2"/>
</dbReference>
<dbReference type="SMART" id="SM00824">
    <property type="entry name" value="PKS_TE"/>
    <property type="match status" value="1"/>
</dbReference>
<dbReference type="SUPFAM" id="SSF47336">
    <property type="entry name" value="ACP-like"/>
    <property type="match status" value="2"/>
</dbReference>
<dbReference type="SUPFAM" id="SSF53474">
    <property type="entry name" value="alpha/beta-Hydrolases"/>
    <property type="match status" value="1"/>
</dbReference>
<dbReference type="SUPFAM" id="SSF52151">
    <property type="entry name" value="FabD/lysophospholipase-like"/>
    <property type="match status" value="1"/>
</dbReference>
<dbReference type="SUPFAM" id="SSF55048">
    <property type="entry name" value="Probable ACP-binding domain of malonyl-CoA ACP transacylase"/>
    <property type="match status" value="1"/>
</dbReference>
<dbReference type="SUPFAM" id="SSF53901">
    <property type="entry name" value="Thiolase-like"/>
    <property type="match status" value="1"/>
</dbReference>
<dbReference type="PROSITE" id="PS50075">
    <property type="entry name" value="CARRIER"/>
    <property type="match status" value="2"/>
</dbReference>
<dbReference type="PROSITE" id="PS00606">
    <property type="entry name" value="KS3_1"/>
    <property type="match status" value="1"/>
</dbReference>
<dbReference type="PROSITE" id="PS52004">
    <property type="entry name" value="KS3_2"/>
    <property type="match status" value="1"/>
</dbReference>
<dbReference type="PROSITE" id="PS52019">
    <property type="entry name" value="PKS_MFAS_DH"/>
    <property type="match status" value="1"/>
</dbReference>
<keyword id="KW-0002">3D-structure</keyword>
<keyword id="KW-0511">Multifunctional enzyme</keyword>
<keyword id="KW-0596">Phosphopantetheine</keyword>
<keyword id="KW-0597">Phosphoprotein</keyword>
<keyword id="KW-0677">Repeat</keyword>
<keyword id="KW-0808">Transferase</keyword>
<keyword id="KW-0843">Virulence</keyword>
<accession>Q6DQW3</accession>